<protein>
    <recommendedName>
        <fullName>Exopolysaccharide II synthesis transcriptional activator ExpG</fullName>
    </recommendedName>
</protein>
<evidence type="ECO:0000255" key="1">
    <source>
        <dbReference type="PROSITE-ProRule" id="PRU00345"/>
    </source>
</evidence>
<evidence type="ECO:0000305" key="2"/>
<accession>P96440</accession>
<accession>Q53002</accession>
<accession>Q9X7L6</accession>
<dbReference type="EMBL" id="U51475">
    <property type="protein sequence ID" value="AAC44137.1"/>
    <property type="status" value="ALT_INIT"/>
    <property type="molecule type" value="Genomic_DNA"/>
</dbReference>
<dbReference type="EMBL" id="Z79692">
    <property type="protein sequence ID" value="CAB01941.1"/>
    <property type="molecule type" value="Genomic_DNA"/>
</dbReference>
<dbReference type="EMBL" id="Y08703">
    <property type="protein sequence ID" value="CAB41454.1"/>
    <property type="molecule type" value="Genomic_DNA"/>
</dbReference>
<dbReference type="EMBL" id="AL591985">
    <property type="protein sequence ID" value="CAC49293.1"/>
    <property type="molecule type" value="Genomic_DNA"/>
</dbReference>
<dbReference type="PIR" id="E95953">
    <property type="entry name" value="E95953"/>
</dbReference>
<dbReference type="RefSeq" id="NP_437433.1">
    <property type="nucleotide sequence ID" value="NC_003078.1"/>
</dbReference>
<dbReference type="RefSeq" id="WP_003529010.1">
    <property type="nucleotide sequence ID" value="NC_003078.1"/>
</dbReference>
<dbReference type="SMR" id="P96440"/>
<dbReference type="EnsemblBacteria" id="CAC49293">
    <property type="protein sequence ID" value="CAC49293"/>
    <property type="gene ID" value="SM_b21317"/>
</dbReference>
<dbReference type="KEGG" id="sme:SM_b21317"/>
<dbReference type="PATRIC" id="fig|266834.11.peg.5821"/>
<dbReference type="eggNOG" id="COG1846">
    <property type="taxonomic scope" value="Bacteria"/>
</dbReference>
<dbReference type="HOGENOM" id="CLU_109241_0_0_5"/>
<dbReference type="OrthoDB" id="9793286at2"/>
<dbReference type="Proteomes" id="UP000001976">
    <property type="component" value="Plasmid pSymB"/>
</dbReference>
<dbReference type="CollecTF" id="EXPREG_00000c20"/>
<dbReference type="GO" id="GO:0003677">
    <property type="term" value="F:DNA binding"/>
    <property type="evidence" value="ECO:0007669"/>
    <property type="project" value="UniProtKB-KW"/>
</dbReference>
<dbReference type="GO" id="GO:0003700">
    <property type="term" value="F:DNA-binding transcription factor activity"/>
    <property type="evidence" value="ECO:0007669"/>
    <property type="project" value="InterPro"/>
</dbReference>
<dbReference type="GO" id="GO:0006950">
    <property type="term" value="P:response to stress"/>
    <property type="evidence" value="ECO:0007669"/>
    <property type="project" value="TreeGrafter"/>
</dbReference>
<dbReference type="Gene3D" id="1.10.10.10">
    <property type="entry name" value="Winged helix-like DNA-binding domain superfamily/Winged helix DNA-binding domain"/>
    <property type="match status" value="1"/>
</dbReference>
<dbReference type="InterPro" id="IPR000835">
    <property type="entry name" value="HTH_MarR-typ"/>
</dbReference>
<dbReference type="InterPro" id="IPR039422">
    <property type="entry name" value="MarR/SlyA-like"/>
</dbReference>
<dbReference type="InterPro" id="IPR023187">
    <property type="entry name" value="Tscrpt_reg_MarR-type_CS"/>
</dbReference>
<dbReference type="InterPro" id="IPR036388">
    <property type="entry name" value="WH-like_DNA-bd_sf"/>
</dbReference>
<dbReference type="InterPro" id="IPR036390">
    <property type="entry name" value="WH_DNA-bd_sf"/>
</dbReference>
<dbReference type="PANTHER" id="PTHR33164">
    <property type="entry name" value="TRANSCRIPTIONAL REGULATOR, MARR FAMILY"/>
    <property type="match status" value="1"/>
</dbReference>
<dbReference type="PANTHER" id="PTHR33164:SF102">
    <property type="entry name" value="TRANSCRIPTIONAL REGULATORY PROTEIN"/>
    <property type="match status" value="1"/>
</dbReference>
<dbReference type="Pfam" id="PF12802">
    <property type="entry name" value="MarR_2"/>
    <property type="match status" value="1"/>
</dbReference>
<dbReference type="SMART" id="SM00347">
    <property type="entry name" value="HTH_MARR"/>
    <property type="match status" value="1"/>
</dbReference>
<dbReference type="SUPFAM" id="SSF46785">
    <property type="entry name" value="Winged helix' DNA-binding domain"/>
    <property type="match status" value="1"/>
</dbReference>
<dbReference type="PROSITE" id="PS01117">
    <property type="entry name" value="HTH_MARR_1"/>
    <property type="match status" value="1"/>
</dbReference>
<dbReference type="PROSITE" id="PS50995">
    <property type="entry name" value="HTH_MARR_2"/>
    <property type="match status" value="1"/>
</dbReference>
<gene>
    <name type="primary">expG</name>
    <name type="synonym">mucS</name>
    <name type="ordered locus">RB0893</name>
    <name type="ORF">SMb21317</name>
</gene>
<feature type="chain" id="PRO_0000054353" description="Exopolysaccharide II synthesis transcriptional activator ExpG">
    <location>
        <begin position="1"/>
        <end position="194"/>
    </location>
</feature>
<feature type="domain" description="HTH marR-type" evidence="1">
    <location>
        <begin position="49"/>
        <end position="184"/>
    </location>
</feature>
<feature type="sequence variant" description="In strain: EFB1.">
    <original>I</original>
    <variation>M</variation>
    <location>
        <position position="9"/>
    </location>
</feature>
<feature type="sequence variant" description="In strain: EFB1.">
    <original>AI</original>
    <variation>SV</variation>
    <location>
        <begin position="21"/>
        <end position="22"/>
    </location>
</feature>
<feature type="sequence variant" description="In strain: EFB1.">
    <original>Q</original>
    <variation>M</variation>
    <location>
        <position position="29"/>
    </location>
</feature>
<feature type="sequence variant" description="In strain: EFB1.">
    <original>DTPVDDR</original>
    <variation>ETLAADQ</variation>
    <location>
        <begin position="34"/>
        <end position="40"/>
    </location>
</feature>
<feature type="sequence variant" description="In strain: EFB1.">
    <original>D</original>
    <variation>N</variation>
    <location>
        <position position="44"/>
    </location>
</feature>
<feature type="sequence variant" description="In strain: EFB1.">
    <original>L</original>
    <variation>Q</variation>
    <location>
        <position position="52"/>
    </location>
</feature>
<feature type="sequence variant" description="In strain: EFB1.">
    <original>E</original>
    <variation>D</variation>
    <location>
        <position position="77"/>
    </location>
</feature>
<feature type="sequence variant" description="In strain: EFB1.">
    <original>E</original>
    <variation>D</variation>
    <location>
        <position position="92"/>
    </location>
</feature>
<feature type="sequence variant" description="In strain: EFB1.">
    <original>E</original>
    <variation>V</variation>
    <location>
        <position position="142"/>
    </location>
</feature>
<feature type="sequence variant" description="In strain: EFB1.">
    <original>L</original>
    <variation>V</variation>
    <location>
        <position position="147"/>
    </location>
</feature>
<feature type="sequence variant" description="In strain: EFB1.">
    <original>Q</original>
    <variation>E</variation>
    <location>
        <position position="153"/>
    </location>
</feature>
<feature type="sequence variant" description="In strain: EFB1.">
    <original>D</original>
    <variation>E</variation>
    <location>
        <position position="166"/>
    </location>
</feature>
<reference key="1">
    <citation type="journal article" date="1996" name="Mol. Plant Microbe Interact.">
        <title>mucS, a gene involved in activation of galactoglucan (EPS II) synthesis gene expression in Rhizobium meliloti.</title>
        <authorList>
            <person name="Astete S.G."/>
            <person name="Leigh J.A."/>
        </authorList>
    </citation>
    <scope>NUCLEOTIDE SEQUENCE [GENOMIC DNA]</scope>
    <source>
        <strain>1021</strain>
    </source>
</reference>
<reference key="2">
    <citation type="journal article" date="1997" name="J. Bacteriol.">
        <title>The 32-kilobase exp gene cluster of Rhizobium meliloti directing the biosynthesis of galactoglucan: genetic organization and properties of the encoded gene products.</title>
        <authorList>
            <person name="Becker A."/>
            <person name="Rueberg S."/>
            <person name="Kuester H."/>
            <person name="Roxlau A.A."/>
            <person name="Keller M."/>
            <person name="Ivashina T."/>
            <person name="Cheng H."/>
            <person name="Walker G.C."/>
            <person name="Puehler A."/>
        </authorList>
    </citation>
    <scope>NUCLEOTIDE SEQUENCE [GENOMIC DNA]</scope>
    <source>
        <strain>RCR2011 / SU47</strain>
    </source>
</reference>
<reference key="3">
    <citation type="journal article" date="1998" name="Appl. Environ. Microbiol.">
        <title>Exopolysaccharide II production is regulated by salt in the halotolerant strain Rhizobium meliloti EFB1.</title>
        <authorList>
            <person name="Lloret J."/>
            <person name="Wulff B.B.H."/>
            <person name="Rubio J.M."/>
            <person name="Downie J.A."/>
            <person name="Bonilla I."/>
            <person name="Rivilla R."/>
        </authorList>
    </citation>
    <scope>NUCLEOTIDE SEQUENCE [GENOMIC DNA]</scope>
    <source>
        <strain>EFB1</strain>
    </source>
</reference>
<reference key="4">
    <citation type="journal article" date="2001" name="Proc. Natl. Acad. Sci. U.S.A.">
        <title>The complete sequence of the 1,683-kb pSymB megaplasmid from the N2-fixing endosymbiont Sinorhizobium meliloti.</title>
        <authorList>
            <person name="Finan T.M."/>
            <person name="Weidner S."/>
            <person name="Wong K."/>
            <person name="Buhrmester J."/>
            <person name="Chain P."/>
            <person name="Vorhoelter F.J."/>
            <person name="Hernandez-Lucas I."/>
            <person name="Becker A."/>
            <person name="Cowie A."/>
            <person name="Gouzy J."/>
            <person name="Golding B."/>
            <person name="Puehler A."/>
        </authorList>
    </citation>
    <scope>NUCLEOTIDE SEQUENCE [LARGE SCALE GENOMIC DNA]</scope>
    <source>
        <strain>1021</strain>
    </source>
</reference>
<reference key="5">
    <citation type="journal article" date="2001" name="Science">
        <title>The composite genome of the legume symbiont Sinorhizobium meliloti.</title>
        <authorList>
            <person name="Galibert F."/>
            <person name="Finan T.M."/>
            <person name="Long S.R."/>
            <person name="Puehler A."/>
            <person name="Abola P."/>
            <person name="Ampe F."/>
            <person name="Barloy-Hubler F."/>
            <person name="Barnett M.J."/>
            <person name="Becker A."/>
            <person name="Boistard P."/>
            <person name="Bothe G."/>
            <person name="Boutry M."/>
            <person name="Bowser L."/>
            <person name="Buhrmester J."/>
            <person name="Cadieu E."/>
            <person name="Capela D."/>
            <person name="Chain P."/>
            <person name="Cowie A."/>
            <person name="Davis R.W."/>
            <person name="Dreano S."/>
            <person name="Federspiel N.A."/>
            <person name="Fisher R.F."/>
            <person name="Gloux S."/>
            <person name="Godrie T."/>
            <person name="Goffeau A."/>
            <person name="Golding B."/>
            <person name="Gouzy J."/>
            <person name="Gurjal M."/>
            <person name="Hernandez-Lucas I."/>
            <person name="Hong A."/>
            <person name="Huizar L."/>
            <person name="Hyman R.W."/>
            <person name="Jones T."/>
            <person name="Kahn D."/>
            <person name="Kahn M.L."/>
            <person name="Kalman S."/>
            <person name="Keating D.H."/>
            <person name="Kiss E."/>
            <person name="Komp C."/>
            <person name="Lelaure V."/>
            <person name="Masuy D."/>
            <person name="Palm C."/>
            <person name="Peck M.C."/>
            <person name="Pohl T.M."/>
            <person name="Portetelle D."/>
            <person name="Purnelle B."/>
            <person name="Ramsperger U."/>
            <person name="Surzycki R."/>
            <person name="Thebault P."/>
            <person name="Vandenbol M."/>
            <person name="Vorhoelter F.J."/>
            <person name="Weidner S."/>
            <person name="Wells D.H."/>
            <person name="Wong K."/>
            <person name="Yeh K.-C."/>
            <person name="Batut J."/>
        </authorList>
    </citation>
    <scope>NUCLEOTIDE SEQUENCE [LARGE SCALE GENOMIC DNA]</scope>
    <source>
        <strain>1021</strain>
    </source>
</reference>
<name>EXPG_RHIME</name>
<comment type="function">
    <text>Transcriptional activator of genes for galactoglucan synthesis (exopolysaccharide II or EPS II).</text>
</comment>
<comment type="sequence caution" evidence="2">
    <conflict type="erroneous initiation">
        <sequence resource="EMBL-CDS" id="AAC44137"/>
    </conflict>
</comment>
<geneLocation type="plasmid">
    <name>pSymB</name>
    <name>megaplasmid 2</name>
</geneLocation>
<sequence>MERGMNHRILYPFADFGDTVAILPANETQRKGLDTPVDDRDGDDSLVTYFELARVMERASRRFSGLLRAELTKLGVEDIGPAQAMVLLAIGEAELSVGELLDRGHYVGSNISYYLKQLADGDYIDRIASQRDKRSARIRLSEKGRQLCAGLRQAAKGYERALSHGDQDRRNLETAFQTLHRLELVWGNAARYGI</sequence>
<proteinExistence type="predicted"/>
<organism>
    <name type="scientific">Rhizobium meliloti (strain 1021)</name>
    <name type="common">Ensifer meliloti</name>
    <name type="synonym">Sinorhizobium meliloti</name>
    <dbReference type="NCBI Taxonomy" id="266834"/>
    <lineage>
        <taxon>Bacteria</taxon>
        <taxon>Pseudomonadati</taxon>
        <taxon>Pseudomonadota</taxon>
        <taxon>Alphaproteobacteria</taxon>
        <taxon>Hyphomicrobiales</taxon>
        <taxon>Rhizobiaceae</taxon>
        <taxon>Sinorhizobium/Ensifer group</taxon>
        <taxon>Sinorhizobium</taxon>
    </lineage>
</organism>
<keyword id="KW-0010">Activator</keyword>
<keyword id="KW-0238">DNA-binding</keyword>
<keyword id="KW-0614">Plasmid</keyword>
<keyword id="KW-1185">Reference proteome</keyword>
<keyword id="KW-0804">Transcription</keyword>
<keyword id="KW-0805">Transcription regulation</keyword>